<keyword id="KW-0028">Amino-acid biosynthesis</keyword>
<keyword id="KW-0100">Branched-chain amino acid biosynthesis</keyword>
<keyword id="KW-0432">Leucine biosynthesis</keyword>
<keyword id="KW-0456">Lyase</keyword>
<keyword id="KW-1185">Reference proteome</keyword>
<reference key="1">
    <citation type="journal article" date="2009" name="PLoS Genet.">
        <title>Organised genome dynamics in the Escherichia coli species results in highly diverse adaptive paths.</title>
        <authorList>
            <person name="Touchon M."/>
            <person name="Hoede C."/>
            <person name="Tenaillon O."/>
            <person name="Barbe V."/>
            <person name="Baeriswyl S."/>
            <person name="Bidet P."/>
            <person name="Bingen E."/>
            <person name="Bonacorsi S."/>
            <person name="Bouchier C."/>
            <person name="Bouvet O."/>
            <person name="Calteau A."/>
            <person name="Chiapello H."/>
            <person name="Clermont O."/>
            <person name="Cruveiller S."/>
            <person name="Danchin A."/>
            <person name="Diard M."/>
            <person name="Dossat C."/>
            <person name="Karoui M.E."/>
            <person name="Frapy E."/>
            <person name="Garry L."/>
            <person name="Ghigo J.M."/>
            <person name="Gilles A.M."/>
            <person name="Johnson J."/>
            <person name="Le Bouguenec C."/>
            <person name="Lescat M."/>
            <person name="Mangenot S."/>
            <person name="Martinez-Jehanne V."/>
            <person name="Matic I."/>
            <person name="Nassif X."/>
            <person name="Oztas S."/>
            <person name="Petit M.A."/>
            <person name="Pichon C."/>
            <person name="Rouy Z."/>
            <person name="Ruf C.S."/>
            <person name="Schneider D."/>
            <person name="Tourret J."/>
            <person name="Vacherie B."/>
            <person name="Vallenet D."/>
            <person name="Medigue C."/>
            <person name="Rocha E.P.C."/>
            <person name="Denamur E."/>
        </authorList>
    </citation>
    <scope>NUCLEOTIDE SEQUENCE [LARGE SCALE GENOMIC DNA]</scope>
    <source>
        <strain>S88 / ExPEC</strain>
    </source>
</reference>
<protein>
    <recommendedName>
        <fullName evidence="1">3-isopropylmalate dehydratase small subunit</fullName>
        <ecNumber evidence="1">4.2.1.33</ecNumber>
    </recommendedName>
    <alternativeName>
        <fullName evidence="1">Alpha-IPM isomerase</fullName>
        <shortName evidence="1">IPMI</shortName>
    </alternativeName>
    <alternativeName>
        <fullName evidence="1">Isopropylmalate isomerase</fullName>
    </alternativeName>
</protein>
<gene>
    <name evidence="1" type="primary">leuD</name>
    <name type="ordered locus">ECS88_0076</name>
</gene>
<evidence type="ECO:0000255" key="1">
    <source>
        <dbReference type="HAMAP-Rule" id="MF_01031"/>
    </source>
</evidence>
<organism>
    <name type="scientific">Escherichia coli O45:K1 (strain S88 / ExPEC)</name>
    <dbReference type="NCBI Taxonomy" id="585035"/>
    <lineage>
        <taxon>Bacteria</taxon>
        <taxon>Pseudomonadati</taxon>
        <taxon>Pseudomonadota</taxon>
        <taxon>Gammaproteobacteria</taxon>
        <taxon>Enterobacterales</taxon>
        <taxon>Enterobacteriaceae</taxon>
        <taxon>Escherichia</taxon>
    </lineage>
</organism>
<name>LEUD_ECO45</name>
<proteinExistence type="inferred from homology"/>
<feature type="chain" id="PRO_1000135800" description="3-isopropylmalate dehydratase small subunit">
    <location>
        <begin position="1"/>
        <end position="201"/>
    </location>
</feature>
<dbReference type="EC" id="4.2.1.33" evidence="1"/>
<dbReference type="EMBL" id="CU928161">
    <property type="protein sequence ID" value="CAR01442.1"/>
    <property type="molecule type" value="Genomic_DNA"/>
</dbReference>
<dbReference type="RefSeq" id="WP_000818231.1">
    <property type="nucleotide sequence ID" value="NC_011742.1"/>
</dbReference>
<dbReference type="SMR" id="B7MAJ6"/>
<dbReference type="KEGG" id="ecz:ECS88_0076"/>
<dbReference type="HOGENOM" id="CLU_081378_0_3_6"/>
<dbReference type="UniPathway" id="UPA00048">
    <property type="reaction ID" value="UER00071"/>
</dbReference>
<dbReference type="Proteomes" id="UP000000747">
    <property type="component" value="Chromosome"/>
</dbReference>
<dbReference type="GO" id="GO:0009316">
    <property type="term" value="C:3-isopropylmalate dehydratase complex"/>
    <property type="evidence" value="ECO:0007669"/>
    <property type="project" value="InterPro"/>
</dbReference>
<dbReference type="GO" id="GO:0003861">
    <property type="term" value="F:3-isopropylmalate dehydratase activity"/>
    <property type="evidence" value="ECO:0007669"/>
    <property type="project" value="UniProtKB-UniRule"/>
</dbReference>
<dbReference type="GO" id="GO:0009098">
    <property type="term" value="P:L-leucine biosynthetic process"/>
    <property type="evidence" value="ECO:0007669"/>
    <property type="project" value="UniProtKB-UniRule"/>
</dbReference>
<dbReference type="CDD" id="cd01577">
    <property type="entry name" value="IPMI_Swivel"/>
    <property type="match status" value="1"/>
</dbReference>
<dbReference type="FunFam" id="3.20.19.10:FF:000003">
    <property type="entry name" value="3-isopropylmalate dehydratase small subunit"/>
    <property type="match status" value="1"/>
</dbReference>
<dbReference type="Gene3D" id="3.20.19.10">
    <property type="entry name" value="Aconitase, domain 4"/>
    <property type="match status" value="1"/>
</dbReference>
<dbReference type="HAMAP" id="MF_01031">
    <property type="entry name" value="LeuD_type1"/>
    <property type="match status" value="1"/>
</dbReference>
<dbReference type="InterPro" id="IPR004431">
    <property type="entry name" value="3-IsopropMal_deHydase_ssu"/>
</dbReference>
<dbReference type="InterPro" id="IPR015928">
    <property type="entry name" value="Aconitase/3IPM_dehydase_swvl"/>
</dbReference>
<dbReference type="InterPro" id="IPR000573">
    <property type="entry name" value="AconitaseA/IPMdHydase_ssu_swvl"/>
</dbReference>
<dbReference type="InterPro" id="IPR033940">
    <property type="entry name" value="IPMI_Swivel"/>
</dbReference>
<dbReference type="InterPro" id="IPR050075">
    <property type="entry name" value="LeuD"/>
</dbReference>
<dbReference type="NCBIfam" id="TIGR00171">
    <property type="entry name" value="leuD"/>
    <property type="match status" value="1"/>
</dbReference>
<dbReference type="NCBIfam" id="NF002458">
    <property type="entry name" value="PRK01641.1"/>
    <property type="match status" value="1"/>
</dbReference>
<dbReference type="PANTHER" id="PTHR43345:SF5">
    <property type="entry name" value="3-ISOPROPYLMALATE DEHYDRATASE SMALL SUBUNIT"/>
    <property type="match status" value="1"/>
</dbReference>
<dbReference type="PANTHER" id="PTHR43345">
    <property type="entry name" value="3-ISOPROPYLMALATE DEHYDRATASE SMALL SUBUNIT 2-RELATED-RELATED"/>
    <property type="match status" value="1"/>
</dbReference>
<dbReference type="Pfam" id="PF00694">
    <property type="entry name" value="Aconitase_C"/>
    <property type="match status" value="1"/>
</dbReference>
<dbReference type="SUPFAM" id="SSF52016">
    <property type="entry name" value="LeuD/IlvD-like"/>
    <property type="match status" value="1"/>
</dbReference>
<accession>B7MAJ6</accession>
<sequence>MAEKFIKHTGLVVPLDAANVDTDAIIPKQFLQKVTRTGFGAHLFNDWRFLDEKGQQPNPDFVLNFPQYQGASILLARENFGCGSSREHAPWALTDYGFKVVIAPSFADIFYGNSFNNQLLPVKLSDAEVDELFALVKANPGIHFDVDLEAQEVKAGEKTYRFTIDAFRRHCMMNGLDSIGLTLQHDDAIASYEEKQPAFMR</sequence>
<comment type="function">
    <text evidence="1">Catalyzes the isomerization between 2-isopropylmalate and 3-isopropylmalate, via the formation of 2-isopropylmaleate.</text>
</comment>
<comment type="catalytic activity">
    <reaction evidence="1">
        <text>(2R,3S)-3-isopropylmalate = (2S)-2-isopropylmalate</text>
        <dbReference type="Rhea" id="RHEA:32287"/>
        <dbReference type="ChEBI" id="CHEBI:1178"/>
        <dbReference type="ChEBI" id="CHEBI:35121"/>
        <dbReference type="EC" id="4.2.1.33"/>
    </reaction>
</comment>
<comment type="pathway">
    <text evidence="1">Amino-acid biosynthesis; L-leucine biosynthesis; L-leucine from 3-methyl-2-oxobutanoate: step 2/4.</text>
</comment>
<comment type="subunit">
    <text evidence="1">Heterodimer of LeuC and LeuD.</text>
</comment>
<comment type="similarity">
    <text evidence="1">Belongs to the LeuD family. LeuD type 1 subfamily.</text>
</comment>